<organism>
    <name type="scientific">Sulfolobus acidocaldarius (strain ATCC 33909 / DSM 639 / JCM 8929 / NBRC 15157 / NCIMB 11770)</name>
    <dbReference type="NCBI Taxonomy" id="330779"/>
    <lineage>
        <taxon>Archaea</taxon>
        <taxon>Thermoproteota</taxon>
        <taxon>Thermoprotei</taxon>
        <taxon>Sulfolobales</taxon>
        <taxon>Sulfolobaceae</taxon>
        <taxon>Sulfolobus</taxon>
    </lineage>
</organism>
<accession>P37820</accession>
<accession>Q4JC64</accession>
<gene>
    <name type="primary">mpg1</name>
    <name type="ordered locus">Saci_0196</name>
</gene>
<name>MPG1_SULAC</name>
<keyword id="KW-0342">GTP-binding</keyword>
<keyword id="KW-0547">Nucleotide-binding</keyword>
<keyword id="KW-0548">Nucleotidyltransferase</keyword>
<keyword id="KW-1185">Reference proteome</keyword>
<keyword id="KW-0808">Transferase</keyword>
<comment type="catalytic activity">
    <reaction>
        <text>alpha-D-mannose 1-phosphate + GTP + H(+) = GDP-alpha-D-mannose + diphosphate</text>
        <dbReference type="Rhea" id="RHEA:15229"/>
        <dbReference type="ChEBI" id="CHEBI:15378"/>
        <dbReference type="ChEBI" id="CHEBI:33019"/>
        <dbReference type="ChEBI" id="CHEBI:37565"/>
        <dbReference type="ChEBI" id="CHEBI:57527"/>
        <dbReference type="ChEBI" id="CHEBI:58409"/>
        <dbReference type="EC" id="2.7.7.13"/>
    </reaction>
</comment>
<comment type="similarity">
    <text evidence="1">Belongs to the transferase hexapeptide repeat family.</text>
</comment>
<sequence length="359" mass="39721">MVSAIVLAGGYATRLRPLSLTKPKALLPVLGKPLMDYTLYSLASSDVDTIYLSLRVMADKVLDHVKQLNLQKNIVSVIEESRLGDAGPLKFINSKYNLSDDVIVVYGDIYAEIDFNKLLEYHQSKGCNATLTATQVEDPSRYGVLITDGHRLIQIIEKPKTPLSNLVNAGIYVFKKELLNKIDGLSISRDFLPKLLVSDTCVSVYPYKGLWMDIGVPRDYMRINLELLTLKYPKGFISQSAKVSEKAELFPPFYIGDNTTVGEGSSIRNSIIGVNNRIGNGSCVEESILMNDVMLGDFSLIKESVIGDEVSLGKWNRVDGAIIGDGVLIHDQVFINRDTIILPDKEVAESVYDKGKIIL</sequence>
<reference key="1">
    <citation type="journal article" date="2005" name="J. Bacteriol.">
        <title>The genome of Sulfolobus acidocaldarius, a model organism of the Crenarchaeota.</title>
        <authorList>
            <person name="Chen L."/>
            <person name="Bruegger K."/>
            <person name="Skovgaard M."/>
            <person name="Redder P."/>
            <person name="She Q."/>
            <person name="Torarinsson E."/>
            <person name="Greve B."/>
            <person name="Awayez M."/>
            <person name="Zibat A."/>
            <person name="Klenk H.-P."/>
            <person name="Garrett R.A."/>
        </authorList>
    </citation>
    <scope>NUCLEOTIDE SEQUENCE [LARGE SCALE GENOMIC DNA]</scope>
    <source>
        <strain>ATCC 33909 / DSM 639 / JCM 8929 / NBRC 15157 / NCIMB 11770</strain>
    </source>
</reference>
<reference key="2">
    <citation type="journal article" date="1993" name="Biochim. Biophys. Acta">
        <title>Nucleotide sequence, transcription and phylogeny of the gene encoding the superoxide dismutase of Sulfolobus acidocaldarius.</title>
        <authorList>
            <person name="Klenk H.-P."/>
            <person name="Schleper C."/>
            <person name="Schwass V."/>
            <person name="Brudler R."/>
        </authorList>
    </citation>
    <scope>NUCLEOTIDE SEQUENCE [GENOMIC DNA] OF 1-142</scope>
</reference>
<evidence type="ECO:0000305" key="1"/>
<proteinExistence type="inferred from homology"/>
<feature type="chain" id="PRO_0000068742" description="Putative mannose-1-phosphate guanyltransferase">
    <location>
        <begin position="1"/>
        <end position="359"/>
    </location>
</feature>
<feature type="sequence conflict" description="In Ref. 2." evidence="1" ref="2">
    <location>
        <position position="140"/>
    </location>
</feature>
<protein>
    <recommendedName>
        <fullName>Putative mannose-1-phosphate guanyltransferase</fullName>
        <ecNumber>2.7.7.13</ecNumber>
    </recommendedName>
    <alternativeName>
        <fullName>ATP-mannose-1-phosphate guanylyltransferase</fullName>
    </alternativeName>
    <alternativeName>
        <fullName>GDP-mannose pyrophosphorylase</fullName>
    </alternativeName>
    <alternativeName>
        <fullName>NDP-hexose pyrophosphorylase</fullName>
    </alternativeName>
</protein>
<dbReference type="EC" id="2.7.7.13"/>
<dbReference type="EMBL" id="CP000077">
    <property type="protein sequence ID" value="AAY79615.1"/>
    <property type="molecule type" value="Genomic_DNA"/>
</dbReference>
<dbReference type="EMBL" id="X63386">
    <property type="protein sequence ID" value="CAA44994.1"/>
    <property type="molecule type" value="Genomic_DNA"/>
</dbReference>
<dbReference type="PIR" id="S34617">
    <property type="entry name" value="S34617"/>
</dbReference>
<dbReference type="RefSeq" id="WP_011277116.1">
    <property type="nucleotide sequence ID" value="NC_007181.1"/>
</dbReference>
<dbReference type="SMR" id="P37820"/>
<dbReference type="STRING" id="330779.Saci_0196"/>
<dbReference type="GeneID" id="14550724"/>
<dbReference type="KEGG" id="sai:Saci_0196"/>
<dbReference type="PATRIC" id="fig|330779.12.peg.188"/>
<dbReference type="eggNOG" id="arCOG00666">
    <property type="taxonomic scope" value="Archaea"/>
</dbReference>
<dbReference type="HOGENOM" id="CLU_029499_0_2_2"/>
<dbReference type="Proteomes" id="UP000001018">
    <property type="component" value="Chromosome"/>
</dbReference>
<dbReference type="GO" id="GO:0005525">
    <property type="term" value="F:GTP binding"/>
    <property type="evidence" value="ECO:0007669"/>
    <property type="project" value="UniProtKB-KW"/>
</dbReference>
<dbReference type="GO" id="GO:0004475">
    <property type="term" value="F:mannose-1-phosphate guanylyltransferase (GTP) activity"/>
    <property type="evidence" value="ECO:0007669"/>
    <property type="project" value="UniProtKB-EC"/>
</dbReference>
<dbReference type="GO" id="GO:0009058">
    <property type="term" value="P:biosynthetic process"/>
    <property type="evidence" value="ECO:0007669"/>
    <property type="project" value="InterPro"/>
</dbReference>
<dbReference type="CDD" id="cd03356">
    <property type="entry name" value="LbH_G1P_AT_C_like"/>
    <property type="match status" value="1"/>
</dbReference>
<dbReference type="CDD" id="cd04181">
    <property type="entry name" value="NTP_transferase"/>
    <property type="match status" value="1"/>
</dbReference>
<dbReference type="Gene3D" id="2.160.10.10">
    <property type="entry name" value="Hexapeptide repeat proteins"/>
    <property type="match status" value="1"/>
</dbReference>
<dbReference type="Gene3D" id="3.90.550.10">
    <property type="entry name" value="Spore Coat Polysaccharide Biosynthesis Protein SpsA, Chain A"/>
    <property type="match status" value="1"/>
</dbReference>
<dbReference type="InterPro" id="IPR050486">
    <property type="entry name" value="Mannose-1P_guanyltransferase"/>
</dbReference>
<dbReference type="InterPro" id="IPR005835">
    <property type="entry name" value="NTP_transferase_dom"/>
</dbReference>
<dbReference type="InterPro" id="IPR029044">
    <property type="entry name" value="Nucleotide-diphossugar_trans"/>
</dbReference>
<dbReference type="PANTHER" id="PTHR22572">
    <property type="entry name" value="SUGAR-1-PHOSPHATE GUANYL TRANSFERASE"/>
    <property type="match status" value="1"/>
</dbReference>
<dbReference type="Pfam" id="PF25084">
    <property type="entry name" value="LbH_EIF2B"/>
    <property type="match status" value="1"/>
</dbReference>
<dbReference type="Pfam" id="PF00483">
    <property type="entry name" value="NTP_transferase"/>
    <property type="match status" value="1"/>
</dbReference>
<dbReference type="SUPFAM" id="SSF53448">
    <property type="entry name" value="Nucleotide-diphospho-sugar transferases"/>
    <property type="match status" value="1"/>
</dbReference>